<protein>
    <recommendedName>
        <fullName>Keratin, type II cytoskeletal 80</fullName>
    </recommendedName>
    <alternativeName>
        <fullName>Cytokeratin-80</fullName>
        <shortName>CK-80</shortName>
    </alternativeName>
    <alternativeName>
        <fullName>Keratin-80</fullName>
        <shortName>K80</shortName>
    </alternativeName>
    <alternativeName>
        <fullName>Type-II keratin Kb20</fullName>
    </alternativeName>
</protein>
<keyword id="KW-0175">Coiled coil</keyword>
<keyword id="KW-0403">Intermediate filament</keyword>
<keyword id="KW-0416">Keratin</keyword>
<keyword id="KW-0597">Phosphoprotein</keyword>
<keyword id="KW-1185">Reference proteome</keyword>
<dbReference type="EMBL" id="BC119366">
    <property type="protein sequence ID" value="AAI19367.1"/>
    <property type="molecule type" value="mRNA"/>
</dbReference>
<dbReference type="EMBL" id="BC120601">
    <property type="protein sequence ID" value="AAI20602.1"/>
    <property type="molecule type" value="mRNA"/>
</dbReference>
<dbReference type="CCDS" id="CCDS37216.1"/>
<dbReference type="RefSeq" id="NP_083046.2">
    <property type="nucleotide sequence ID" value="NM_028770.2"/>
</dbReference>
<dbReference type="SMR" id="Q0VBK2"/>
<dbReference type="BioGRID" id="216512">
    <property type="interactions" value="2"/>
</dbReference>
<dbReference type="ComplexPortal" id="CPX-5866">
    <property type="entry name" value="Keratin-80- Keratin-82 dimer complex"/>
</dbReference>
<dbReference type="FunCoup" id="Q0VBK2">
    <property type="interactions" value="38"/>
</dbReference>
<dbReference type="IntAct" id="Q0VBK2">
    <property type="interactions" value="1"/>
</dbReference>
<dbReference type="MINT" id="Q0VBK2"/>
<dbReference type="STRING" id="10090.ENSMUSP00000076437"/>
<dbReference type="iPTMnet" id="Q0VBK2"/>
<dbReference type="PhosphoSitePlus" id="Q0VBK2"/>
<dbReference type="PaxDb" id="10090-ENSMUSP00000076437"/>
<dbReference type="PeptideAtlas" id="Q0VBK2"/>
<dbReference type="ProteomicsDB" id="269147"/>
<dbReference type="Antibodypedia" id="43038">
    <property type="antibodies" value="153 antibodies from 23 providers"/>
</dbReference>
<dbReference type="DNASU" id="74127"/>
<dbReference type="Ensembl" id="ENSMUST00000077196.6">
    <property type="protein sequence ID" value="ENSMUSP00000076437.5"/>
    <property type="gene ID" value="ENSMUSG00000037185.10"/>
</dbReference>
<dbReference type="GeneID" id="74127"/>
<dbReference type="KEGG" id="mmu:74127"/>
<dbReference type="UCSC" id="uc007xta.1">
    <property type="organism name" value="mouse"/>
</dbReference>
<dbReference type="AGR" id="MGI:1921377"/>
<dbReference type="CTD" id="144501"/>
<dbReference type="MGI" id="MGI:1921377">
    <property type="gene designation" value="Krt80"/>
</dbReference>
<dbReference type="VEuPathDB" id="HostDB:ENSMUSG00000037185"/>
<dbReference type="eggNOG" id="ENOG502RVYD">
    <property type="taxonomic scope" value="Eukaryota"/>
</dbReference>
<dbReference type="GeneTree" id="ENSGT00940000161279"/>
<dbReference type="HOGENOM" id="CLU_012560_5_4_1"/>
<dbReference type="InParanoid" id="Q0VBK2"/>
<dbReference type="OMA" id="CSGMEYT"/>
<dbReference type="OrthoDB" id="2441647at2759"/>
<dbReference type="PhylomeDB" id="Q0VBK2"/>
<dbReference type="TreeFam" id="TF317854"/>
<dbReference type="Reactome" id="R-MMU-6805567">
    <property type="pathway name" value="Keratinization"/>
</dbReference>
<dbReference type="Reactome" id="R-MMU-6809371">
    <property type="pathway name" value="Formation of the cornified envelope"/>
</dbReference>
<dbReference type="BioGRID-ORCS" id="74127">
    <property type="hits" value="1 hit in 78 CRISPR screens"/>
</dbReference>
<dbReference type="ChiTaRS" id="Krt80">
    <property type="organism name" value="mouse"/>
</dbReference>
<dbReference type="PRO" id="PR:Q0VBK2"/>
<dbReference type="Proteomes" id="UP000000589">
    <property type="component" value="Chromosome 15"/>
</dbReference>
<dbReference type="RNAct" id="Q0VBK2">
    <property type="molecule type" value="protein"/>
</dbReference>
<dbReference type="Bgee" id="ENSMUSG00000037185">
    <property type="expression patterns" value="Expressed in lip and 99 other cell types or tissues"/>
</dbReference>
<dbReference type="ExpressionAtlas" id="Q0VBK2">
    <property type="expression patterns" value="baseline and differential"/>
</dbReference>
<dbReference type="GO" id="GO:0045095">
    <property type="term" value="C:keratin filament"/>
    <property type="evidence" value="ECO:0000303"/>
    <property type="project" value="ComplexPortal"/>
</dbReference>
<dbReference type="FunFam" id="1.20.5.1160:FF:000001">
    <property type="entry name" value="Keratin type II"/>
    <property type="match status" value="1"/>
</dbReference>
<dbReference type="FunFam" id="1.20.5.170:FF:000004">
    <property type="entry name" value="Keratin, type II cytoskeletal 5"/>
    <property type="match status" value="1"/>
</dbReference>
<dbReference type="Gene3D" id="1.20.5.170">
    <property type="match status" value="1"/>
</dbReference>
<dbReference type="Gene3D" id="1.20.5.500">
    <property type="entry name" value="Single helix bin"/>
    <property type="match status" value="1"/>
</dbReference>
<dbReference type="Gene3D" id="1.20.5.1160">
    <property type="entry name" value="Vasodilator-stimulated phosphoprotein"/>
    <property type="match status" value="1"/>
</dbReference>
<dbReference type="InterPro" id="IPR039008">
    <property type="entry name" value="IF_rod_dom"/>
</dbReference>
<dbReference type="InterPro" id="IPR032444">
    <property type="entry name" value="Keratin_2_head"/>
</dbReference>
<dbReference type="InterPro" id="IPR003054">
    <property type="entry name" value="Keratin_II"/>
</dbReference>
<dbReference type="PANTHER" id="PTHR45616">
    <property type="entry name" value="GATA-TYPE DOMAIN-CONTAINING PROTEIN"/>
    <property type="match status" value="1"/>
</dbReference>
<dbReference type="PANTHER" id="PTHR45616:SF1">
    <property type="entry name" value="KERATIN, TYPE II CYTOSKELETAL 80"/>
    <property type="match status" value="1"/>
</dbReference>
<dbReference type="Pfam" id="PF00038">
    <property type="entry name" value="Filament"/>
    <property type="match status" value="1"/>
</dbReference>
<dbReference type="Pfam" id="PF16208">
    <property type="entry name" value="Keratin_2_head"/>
    <property type="match status" value="1"/>
</dbReference>
<dbReference type="PRINTS" id="PR01276">
    <property type="entry name" value="TYPE2KERATIN"/>
</dbReference>
<dbReference type="SMART" id="SM01391">
    <property type="entry name" value="Filament"/>
    <property type="match status" value="1"/>
</dbReference>
<dbReference type="SUPFAM" id="SSF64593">
    <property type="entry name" value="Intermediate filament protein, coiled coil region"/>
    <property type="match status" value="2"/>
</dbReference>
<dbReference type="PROSITE" id="PS51842">
    <property type="entry name" value="IF_ROD_2"/>
    <property type="match status" value="1"/>
</dbReference>
<reference key="1">
    <citation type="journal article" date="2004" name="Genome Res.">
        <title>The status, quality, and expansion of the NIH full-length cDNA project: the Mammalian Gene Collection (MGC).</title>
        <authorList>
            <consortium name="The MGC Project Team"/>
        </authorList>
    </citation>
    <scope>NUCLEOTIDE SEQUENCE [LARGE SCALE MRNA]</scope>
    <source>
        <tissue>Brain</tissue>
    </source>
</reference>
<reference key="2">
    <citation type="journal article" date="2010" name="Cell">
        <title>A tissue-specific atlas of mouse protein phosphorylation and expression.</title>
        <authorList>
            <person name="Huttlin E.L."/>
            <person name="Jedrychowski M.P."/>
            <person name="Elias J.E."/>
            <person name="Goswami T."/>
            <person name="Rad R."/>
            <person name="Beausoleil S.A."/>
            <person name="Villen J."/>
            <person name="Haas W."/>
            <person name="Sowa M.E."/>
            <person name="Gygi S.P."/>
        </authorList>
    </citation>
    <scope>IDENTIFICATION BY MASS SPECTROMETRY [LARGE SCALE ANALYSIS]</scope>
    <source>
        <tissue>Pancreas</tissue>
    </source>
</reference>
<organism>
    <name type="scientific">Mus musculus</name>
    <name type="common">Mouse</name>
    <dbReference type="NCBI Taxonomy" id="10090"/>
    <lineage>
        <taxon>Eukaryota</taxon>
        <taxon>Metazoa</taxon>
        <taxon>Chordata</taxon>
        <taxon>Craniata</taxon>
        <taxon>Vertebrata</taxon>
        <taxon>Euteleostomi</taxon>
        <taxon>Mammalia</taxon>
        <taxon>Eutheria</taxon>
        <taxon>Euarchontoglires</taxon>
        <taxon>Glires</taxon>
        <taxon>Rodentia</taxon>
        <taxon>Myomorpha</taxon>
        <taxon>Muroidea</taxon>
        <taxon>Muridae</taxon>
        <taxon>Murinae</taxon>
        <taxon>Mus</taxon>
        <taxon>Mus</taxon>
    </lineage>
</organism>
<evidence type="ECO:0000250" key="1">
    <source>
        <dbReference type="UniProtKB" id="Q6KB66"/>
    </source>
</evidence>
<evidence type="ECO:0000255" key="2">
    <source>
        <dbReference type="PROSITE-ProRule" id="PRU01188"/>
    </source>
</evidence>
<evidence type="ECO:0000256" key="3">
    <source>
        <dbReference type="SAM" id="MobiDB-lite"/>
    </source>
</evidence>
<accession>Q0VBK2</accession>
<proteinExistence type="evidence at protein level"/>
<gene>
    <name type="primary">Krt80</name>
    <name type="synonym">Kb20</name>
</gene>
<comment type="subunit">
    <text>Heterotetramer of two type I and two type II keratins.</text>
</comment>
<comment type="miscellaneous">
    <text>There are two types of cytoskeletal and microfibrillar keratin, I (acidic) and II (neutral to basic) (40-55 and 56-70 kDa, respectively).</text>
</comment>
<comment type="similarity">
    <text evidence="2">Belongs to the intermediate filament family.</text>
</comment>
<sequence length="452" mass="50660">MAYRSCVVGFSSLSGCEMTPAGSPQPGTSGWGSCGLPGPGFSSRSLTSCRPAGTIPKVTVNPSLLVPLDLKVDPAVQQQKNQEKEEMKALNDKFASLIGKVQALEQRNQLLETRWSFLQGQGSATFDLSHHYETFQGRLQEELRKVSQERGQLEANLLQVLEKVEEFRVRYEDEISKRTDLEFTFVQLKKDLDAECLRRTELETKLKGLQGFLELMRTVYEQELKDLTAQVKDVSVTVGLDSRCHIDLSGIVEEVKAQYDAIAARSLEEAEAYSRSQLEERAARSAEFGNSLQSSRCEIADLNVRIQKLRSQIVSVKSHCLKLEENIKVAEEQGELAFQDAKDKMAQLENALQKAKQDMARQLREYQDLMNTKLALDIEIATYHKLMEGEESRMDLPSATVVSTVKSGCRTTASKSGLTKTSSRKKKNRRGPVIKITEMSEKYLSQESEASE</sequence>
<feature type="chain" id="PRO_0000314897" description="Keratin, type II cytoskeletal 80">
    <location>
        <begin position="1"/>
        <end position="452"/>
    </location>
</feature>
<feature type="domain" description="IF rod" evidence="2">
    <location>
        <begin position="83"/>
        <end position="394"/>
    </location>
</feature>
<feature type="region of interest" description="Head">
    <location>
        <begin position="1"/>
        <end position="82"/>
    </location>
</feature>
<feature type="region of interest" description="Coil 1A">
    <location>
        <begin position="82"/>
        <end position="118"/>
    </location>
</feature>
<feature type="region of interest" description="Linker 1">
    <location>
        <begin position="119"/>
        <end position="135"/>
    </location>
</feature>
<feature type="region of interest" description="Coil 1B">
    <location>
        <begin position="136"/>
        <end position="227"/>
    </location>
</feature>
<feature type="region of interest" description="Linker 12">
    <location>
        <begin position="228"/>
        <end position="251"/>
    </location>
</feature>
<feature type="region of interest" description="Coil 2">
    <location>
        <begin position="252"/>
        <end position="390"/>
    </location>
</feature>
<feature type="region of interest" description="Tail">
    <location>
        <begin position="391"/>
        <end position="452"/>
    </location>
</feature>
<feature type="region of interest" description="Disordered" evidence="3">
    <location>
        <begin position="412"/>
        <end position="452"/>
    </location>
</feature>
<feature type="compositionally biased region" description="Basic residues" evidence="3">
    <location>
        <begin position="422"/>
        <end position="432"/>
    </location>
</feature>
<feature type="compositionally biased region" description="Polar residues" evidence="3">
    <location>
        <begin position="443"/>
        <end position="452"/>
    </location>
</feature>
<feature type="site" description="Stutter">
    <location>
        <position position="334"/>
    </location>
</feature>
<feature type="modified residue" description="Phosphoserine" evidence="1">
    <location>
        <position position="45"/>
    </location>
</feature>
<name>K2C80_MOUSE</name>